<accession>A2RL47</accession>
<sequence>MNENLNGILNVYKEAGWTSFDVVAKLRGILKTKKIGHGGTLDPSVTGVLPIAVGKSTRLLEYMEAAGKIYEGQVTIGFSTETEDADGAIVNQTPVKNNLTESEIDSAMSHFVGKIKQIPPMYSAVKINGKKLYEYARAGQTIERPAREITIKSFVRTSPIDWNKEEGLVTFSFKVECSKGTYVRTLAVDLADSLGYAGHMSKLQRTASNGLLIKDAIKLSKIEEIKESGKLSTILYPAEYAVSDLPRVNLTTVQFDMARVGKKFAQSDWTNEVETADSSVNKTKQQEYLLTDLSLLTTEKFAAFYNDKLVAVYMKHPEKEGIWKPNKVLV</sequence>
<comment type="function">
    <text evidence="1">Responsible for synthesis of pseudouridine from uracil-55 in the psi GC loop of transfer RNAs.</text>
</comment>
<comment type="catalytic activity">
    <reaction evidence="1">
        <text>uridine(55) in tRNA = pseudouridine(55) in tRNA</text>
        <dbReference type="Rhea" id="RHEA:42532"/>
        <dbReference type="Rhea" id="RHEA-COMP:10101"/>
        <dbReference type="Rhea" id="RHEA-COMP:10102"/>
        <dbReference type="ChEBI" id="CHEBI:65314"/>
        <dbReference type="ChEBI" id="CHEBI:65315"/>
        <dbReference type="EC" id="5.4.99.25"/>
    </reaction>
</comment>
<comment type="similarity">
    <text evidence="1">Belongs to the pseudouridine synthase TruB family. Type 1 subfamily.</text>
</comment>
<organism>
    <name type="scientific">Lactococcus lactis subsp. cremoris (strain MG1363)</name>
    <dbReference type="NCBI Taxonomy" id="416870"/>
    <lineage>
        <taxon>Bacteria</taxon>
        <taxon>Bacillati</taxon>
        <taxon>Bacillota</taxon>
        <taxon>Bacilli</taxon>
        <taxon>Lactobacillales</taxon>
        <taxon>Streptococcaceae</taxon>
        <taxon>Lactococcus</taxon>
        <taxon>Lactococcus cremoris subsp. cremoris</taxon>
    </lineage>
</organism>
<gene>
    <name evidence="1" type="primary">truB</name>
    <name type="ordered locus">llmg_1431</name>
</gene>
<protein>
    <recommendedName>
        <fullName evidence="1">tRNA pseudouridine synthase B</fullName>
        <ecNumber evidence="1">5.4.99.25</ecNumber>
    </recommendedName>
    <alternativeName>
        <fullName evidence="1">tRNA pseudouridine(55) synthase</fullName>
        <shortName evidence="1">Psi55 synthase</shortName>
    </alternativeName>
    <alternativeName>
        <fullName evidence="1">tRNA pseudouridylate synthase</fullName>
    </alternativeName>
    <alternativeName>
        <fullName evidence="1">tRNA-uridine isomerase</fullName>
    </alternativeName>
</protein>
<feature type="chain" id="PRO_1000084614" description="tRNA pseudouridine synthase B">
    <location>
        <begin position="1"/>
        <end position="330"/>
    </location>
</feature>
<feature type="active site" description="Nucleophile" evidence="1">
    <location>
        <position position="42"/>
    </location>
</feature>
<dbReference type="EC" id="5.4.99.25" evidence="1"/>
<dbReference type="EMBL" id="AM406671">
    <property type="protein sequence ID" value="CAL98013.1"/>
    <property type="molecule type" value="Genomic_DNA"/>
</dbReference>
<dbReference type="SMR" id="A2RL47"/>
<dbReference type="STRING" id="416870.llmg_1431"/>
<dbReference type="KEGG" id="llm:llmg_1431"/>
<dbReference type="eggNOG" id="COG0130">
    <property type="taxonomic scope" value="Bacteria"/>
</dbReference>
<dbReference type="HOGENOM" id="CLU_032087_0_1_9"/>
<dbReference type="OrthoDB" id="9802309at2"/>
<dbReference type="PhylomeDB" id="A2RL47"/>
<dbReference type="Proteomes" id="UP000000364">
    <property type="component" value="Chromosome"/>
</dbReference>
<dbReference type="GO" id="GO:0003723">
    <property type="term" value="F:RNA binding"/>
    <property type="evidence" value="ECO:0007669"/>
    <property type="project" value="InterPro"/>
</dbReference>
<dbReference type="GO" id="GO:0160148">
    <property type="term" value="F:tRNA pseudouridine(55) synthase activity"/>
    <property type="evidence" value="ECO:0007669"/>
    <property type="project" value="UniProtKB-EC"/>
</dbReference>
<dbReference type="GO" id="GO:1990481">
    <property type="term" value="P:mRNA pseudouridine synthesis"/>
    <property type="evidence" value="ECO:0007669"/>
    <property type="project" value="TreeGrafter"/>
</dbReference>
<dbReference type="GO" id="GO:0031119">
    <property type="term" value="P:tRNA pseudouridine synthesis"/>
    <property type="evidence" value="ECO:0007669"/>
    <property type="project" value="UniProtKB-UniRule"/>
</dbReference>
<dbReference type="CDD" id="cd02573">
    <property type="entry name" value="PseudoU_synth_EcTruB"/>
    <property type="match status" value="1"/>
</dbReference>
<dbReference type="FunFam" id="3.30.2350.10:FF:000011">
    <property type="entry name" value="tRNA pseudouridine synthase B"/>
    <property type="match status" value="1"/>
</dbReference>
<dbReference type="Gene3D" id="3.30.2350.10">
    <property type="entry name" value="Pseudouridine synthase"/>
    <property type="match status" value="1"/>
</dbReference>
<dbReference type="HAMAP" id="MF_01080">
    <property type="entry name" value="TruB_bact"/>
    <property type="match status" value="1"/>
</dbReference>
<dbReference type="InterPro" id="IPR020103">
    <property type="entry name" value="PsdUridine_synth_cat_dom_sf"/>
</dbReference>
<dbReference type="InterPro" id="IPR002501">
    <property type="entry name" value="PsdUridine_synth_N"/>
</dbReference>
<dbReference type="InterPro" id="IPR014780">
    <property type="entry name" value="tRNA_psdUridine_synth_TruB"/>
</dbReference>
<dbReference type="InterPro" id="IPR032819">
    <property type="entry name" value="TruB_C"/>
</dbReference>
<dbReference type="NCBIfam" id="TIGR00431">
    <property type="entry name" value="TruB"/>
    <property type="match status" value="1"/>
</dbReference>
<dbReference type="PANTHER" id="PTHR13767:SF2">
    <property type="entry name" value="PSEUDOURIDYLATE SYNTHASE TRUB1"/>
    <property type="match status" value="1"/>
</dbReference>
<dbReference type="PANTHER" id="PTHR13767">
    <property type="entry name" value="TRNA-PSEUDOURIDINE SYNTHASE"/>
    <property type="match status" value="1"/>
</dbReference>
<dbReference type="Pfam" id="PF16198">
    <property type="entry name" value="TruB_C_2"/>
    <property type="match status" value="1"/>
</dbReference>
<dbReference type="Pfam" id="PF01509">
    <property type="entry name" value="TruB_N"/>
    <property type="match status" value="1"/>
</dbReference>
<dbReference type="SUPFAM" id="SSF55120">
    <property type="entry name" value="Pseudouridine synthase"/>
    <property type="match status" value="1"/>
</dbReference>
<keyword id="KW-0413">Isomerase</keyword>
<keyword id="KW-0819">tRNA processing</keyword>
<proteinExistence type="inferred from homology"/>
<evidence type="ECO:0000255" key="1">
    <source>
        <dbReference type="HAMAP-Rule" id="MF_01080"/>
    </source>
</evidence>
<name>TRUB_LACLM</name>
<reference key="1">
    <citation type="journal article" date="2007" name="J. Bacteriol.">
        <title>The complete genome sequence of the lactic acid bacterial paradigm Lactococcus lactis subsp. cremoris MG1363.</title>
        <authorList>
            <person name="Wegmann U."/>
            <person name="O'Connell-Motherway M."/>
            <person name="Zomer A."/>
            <person name="Buist G."/>
            <person name="Shearman C."/>
            <person name="Canchaya C."/>
            <person name="Ventura M."/>
            <person name="Goesmann A."/>
            <person name="Gasson M.J."/>
            <person name="Kuipers O.P."/>
            <person name="van Sinderen D."/>
            <person name="Kok J."/>
        </authorList>
    </citation>
    <scope>NUCLEOTIDE SEQUENCE [LARGE SCALE GENOMIC DNA]</scope>
    <source>
        <strain>MG1363</strain>
    </source>
</reference>